<protein>
    <recommendedName>
        <fullName>OCIA domain-containing protein 1</fullName>
    </recommendedName>
</protein>
<keyword id="KW-0967">Endosome</keyword>
<keyword id="KW-0597">Phosphoprotein</keyword>
<keyword id="KW-1185">Reference proteome</keyword>
<reference key="1">
    <citation type="journal article" date="2004" name="Genome Res.">
        <title>The status, quality, and expansion of the NIH full-length cDNA project: the Mammalian Gene Collection (MGC).</title>
        <authorList>
            <consortium name="The MGC Project Team"/>
        </authorList>
    </citation>
    <scope>NUCLEOTIDE SEQUENCE [LARGE SCALE MRNA]</scope>
    <source>
        <tissue>Heart</tissue>
    </source>
</reference>
<reference key="2">
    <citation type="journal article" date="2006" name="Proc. Natl. Acad. Sci. U.S.A.">
        <title>Quantitative phosphoproteomics of vasopressin-sensitive renal cells: regulation of aquaporin-2 phosphorylation at two sites.</title>
        <authorList>
            <person name="Hoffert J.D."/>
            <person name="Pisitkun T."/>
            <person name="Wang G."/>
            <person name="Shen R.-F."/>
            <person name="Knepper M.A."/>
        </authorList>
    </citation>
    <scope>PHOSPHORYLATION [LARGE SCALE ANALYSIS] AT SER-198</scope>
    <scope>IDENTIFICATION BY MASS SPECTROMETRY [LARGE SCALE ANALYSIS]</scope>
</reference>
<reference key="3">
    <citation type="journal article" date="2012" name="Nat. Commun.">
        <title>Quantitative maps of protein phosphorylation sites across 14 different rat organs and tissues.</title>
        <authorList>
            <person name="Lundby A."/>
            <person name="Secher A."/>
            <person name="Lage K."/>
            <person name="Nordsborg N.B."/>
            <person name="Dmytriyev A."/>
            <person name="Lundby C."/>
            <person name="Olsen J.V."/>
        </authorList>
    </citation>
    <scope>PHOSPHORYLATION [LARGE SCALE ANALYSIS] AT SER-193 AND SER-198</scope>
    <scope>IDENTIFICATION BY MASS SPECTROMETRY [LARGE SCALE ANALYSIS]</scope>
</reference>
<dbReference type="EMBL" id="BC083718">
    <property type="protein sequence ID" value="AAH83718.1"/>
    <property type="molecule type" value="mRNA"/>
</dbReference>
<dbReference type="RefSeq" id="NP_001013896.1">
    <property type="nucleotide sequence ID" value="NM_001013874.1"/>
</dbReference>
<dbReference type="FunCoup" id="Q5XIG4">
    <property type="interactions" value="3047"/>
</dbReference>
<dbReference type="STRING" id="10116.ENSRNOP00000002996"/>
<dbReference type="iPTMnet" id="Q5XIG4"/>
<dbReference type="PhosphoSitePlus" id="Q5XIG4"/>
<dbReference type="jPOST" id="Q5XIG4"/>
<dbReference type="PaxDb" id="10116-ENSRNOP00000002996"/>
<dbReference type="DNASU" id="289590"/>
<dbReference type="GeneID" id="289590"/>
<dbReference type="KEGG" id="rno:289590"/>
<dbReference type="UCSC" id="RGD:1359549">
    <property type="organism name" value="rat"/>
</dbReference>
<dbReference type="AGR" id="RGD:1359549"/>
<dbReference type="CTD" id="54940"/>
<dbReference type="RGD" id="1359549">
    <property type="gene designation" value="Ociad1"/>
</dbReference>
<dbReference type="VEuPathDB" id="HostDB:ENSRNOG00000002205"/>
<dbReference type="eggNOG" id="ENOG502RXQR">
    <property type="taxonomic scope" value="Eukaryota"/>
</dbReference>
<dbReference type="HOGENOM" id="CLU_083038_0_0_1"/>
<dbReference type="InParanoid" id="Q5XIG4"/>
<dbReference type="OrthoDB" id="7859at9989"/>
<dbReference type="PhylomeDB" id="Q5XIG4"/>
<dbReference type="TreeFam" id="TF327106"/>
<dbReference type="PRO" id="PR:Q5XIG4"/>
<dbReference type="Proteomes" id="UP000002494">
    <property type="component" value="Chromosome 14"/>
</dbReference>
<dbReference type="Bgee" id="ENSRNOG00000002205">
    <property type="expression patterns" value="Expressed in cerebellum and 20 other cell types or tissues"/>
</dbReference>
<dbReference type="GO" id="GO:0005768">
    <property type="term" value="C:endosome"/>
    <property type="evidence" value="ECO:0000250"/>
    <property type="project" value="UniProtKB"/>
</dbReference>
<dbReference type="GO" id="GO:2000736">
    <property type="term" value="P:regulation of stem cell differentiation"/>
    <property type="evidence" value="ECO:0000250"/>
    <property type="project" value="UniProtKB"/>
</dbReference>
<dbReference type="InterPro" id="IPR040187">
    <property type="entry name" value="OCAD1/2"/>
</dbReference>
<dbReference type="InterPro" id="IPR009764">
    <property type="entry name" value="OCIA_dom"/>
</dbReference>
<dbReference type="PANTHER" id="PTHR13336:SF4">
    <property type="entry name" value="OCIA DOMAIN-CONTAINING PROTEIN 1"/>
    <property type="match status" value="1"/>
</dbReference>
<dbReference type="PANTHER" id="PTHR13336">
    <property type="entry name" value="OVARIAN CARCINOMA IMMUNOREACTIVE ANTIGEN"/>
    <property type="match status" value="1"/>
</dbReference>
<dbReference type="Pfam" id="PF07051">
    <property type="entry name" value="OCIA"/>
    <property type="match status" value="1"/>
</dbReference>
<name>OCAD1_RAT</name>
<sequence length="247" mass="27659">MNGRADFREPNAQVSRPIPDIGGGYIPTEEEWRLFAECHEECFWFRSVPLAATSMLITQGLISKGILSSHPKYGSIPKLIFACIVGYFAGKLSYVKTCQEKFKKLENSPLGEALRSGELRRSLPPGHYTQKPKYDSNVSGQSSFGTSPAADNIEKETLPRYEPIPFSASMNESTPTGITDHIAQGPDPNLEDSPKRKSVTYEELRNKNRESYGVTLSHKTDPSVRPMQERGPQKEVKVNKYGDTWDE</sequence>
<evidence type="ECO:0000250" key="1">
    <source>
        <dbReference type="UniProtKB" id="Q9CRD0"/>
    </source>
</evidence>
<evidence type="ECO:0000250" key="2">
    <source>
        <dbReference type="UniProtKB" id="Q9NX40"/>
    </source>
</evidence>
<evidence type="ECO:0000256" key="3">
    <source>
        <dbReference type="SAM" id="MobiDB-lite"/>
    </source>
</evidence>
<evidence type="ECO:0000305" key="4"/>
<evidence type="ECO:0000312" key="5">
    <source>
        <dbReference type="RGD" id="1359549"/>
    </source>
</evidence>
<evidence type="ECO:0007744" key="6">
    <source>
    </source>
</evidence>
<evidence type="ECO:0007744" key="7">
    <source>
    </source>
</evidence>
<gene>
    <name evidence="5" type="primary">Ociad1</name>
    <name evidence="1" type="synonym">Asrij</name>
</gene>
<organism>
    <name type="scientific">Rattus norvegicus</name>
    <name type="common">Rat</name>
    <dbReference type="NCBI Taxonomy" id="10116"/>
    <lineage>
        <taxon>Eukaryota</taxon>
        <taxon>Metazoa</taxon>
        <taxon>Chordata</taxon>
        <taxon>Craniata</taxon>
        <taxon>Vertebrata</taxon>
        <taxon>Euteleostomi</taxon>
        <taxon>Mammalia</taxon>
        <taxon>Eutheria</taxon>
        <taxon>Euarchontoglires</taxon>
        <taxon>Glires</taxon>
        <taxon>Rodentia</taxon>
        <taxon>Myomorpha</taxon>
        <taxon>Muroidea</taxon>
        <taxon>Muridae</taxon>
        <taxon>Murinae</taxon>
        <taxon>Rattus</taxon>
    </lineage>
</organism>
<comment type="function">
    <text evidence="1">Maintains stem cell potency (By similarity). Increases STAT3 phosphorylation and controls ERK phosphorylation (By similarity). May act as a scaffold, increasing STAT3 recruitment onto endosomes (By similarity).</text>
</comment>
<comment type="subunit">
    <text evidence="1 2">Interacts with OCIAD2 (By similarity). Interacts with STAT3.</text>
</comment>
<comment type="subcellular location">
    <subcellularLocation>
        <location evidence="1">Endosome</location>
    </subcellularLocation>
</comment>
<comment type="domain">
    <text evidence="1">The OCIA domain is necessary and sufficient for endosomal localization.</text>
</comment>
<comment type="miscellaneous">
    <text>'Asrij' stands for 'blood' in Sanskrit as this protein is strongly expressed in blood vessels.</text>
</comment>
<comment type="similarity">
    <text evidence="4">Belongs to the OCIAD1 family.</text>
</comment>
<feature type="chain" id="PRO_0000299385" description="OCIA domain-containing protein 1">
    <location>
        <begin position="1"/>
        <end position="247"/>
    </location>
</feature>
<feature type="domain" description="OCIA">
    <location>
        <begin position="1"/>
        <end position="112"/>
    </location>
</feature>
<feature type="region of interest" description="Disordered" evidence="3">
    <location>
        <begin position="116"/>
        <end position="247"/>
    </location>
</feature>
<feature type="compositionally biased region" description="Polar residues" evidence="3">
    <location>
        <begin position="136"/>
        <end position="146"/>
    </location>
</feature>
<feature type="compositionally biased region" description="Polar residues" evidence="3">
    <location>
        <begin position="168"/>
        <end position="177"/>
    </location>
</feature>
<feature type="compositionally biased region" description="Basic and acidic residues" evidence="3">
    <location>
        <begin position="192"/>
        <end position="210"/>
    </location>
</feature>
<feature type="compositionally biased region" description="Basic and acidic residues" evidence="3">
    <location>
        <begin position="218"/>
        <end position="240"/>
    </location>
</feature>
<feature type="modified residue" description="Phosphoserine" evidence="2">
    <location>
        <position position="108"/>
    </location>
</feature>
<feature type="modified residue" description="Phosphoserine" evidence="2">
    <location>
        <position position="116"/>
    </location>
</feature>
<feature type="modified residue" description="Phosphoserine" evidence="7">
    <location>
        <position position="193"/>
    </location>
</feature>
<feature type="modified residue" description="Phosphoserine" evidence="6 7">
    <location>
        <position position="198"/>
    </location>
</feature>
<proteinExistence type="evidence at protein level"/>
<accession>Q5XIG4</accession>